<dbReference type="EC" id="4.1.1.65" evidence="1"/>
<dbReference type="EMBL" id="CP001127">
    <property type="protein sequence ID" value="ACF92190.1"/>
    <property type="molecule type" value="Genomic_DNA"/>
</dbReference>
<dbReference type="SMR" id="B4TSE2"/>
<dbReference type="KEGG" id="sew:SeSA_A4617"/>
<dbReference type="HOGENOM" id="CLU_029061_4_1_6"/>
<dbReference type="UniPathway" id="UPA00558">
    <property type="reaction ID" value="UER00616"/>
</dbReference>
<dbReference type="Proteomes" id="UP000001865">
    <property type="component" value="Chromosome"/>
</dbReference>
<dbReference type="GO" id="GO:0005886">
    <property type="term" value="C:plasma membrane"/>
    <property type="evidence" value="ECO:0007669"/>
    <property type="project" value="UniProtKB-SubCell"/>
</dbReference>
<dbReference type="GO" id="GO:0004609">
    <property type="term" value="F:phosphatidylserine decarboxylase activity"/>
    <property type="evidence" value="ECO:0007669"/>
    <property type="project" value="UniProtKB-UniRule"/>
</dbReference>
<dbReference type="GO" id="GO:0006646">
    <property type="term" value="P:phosphatidylethanolamine biosynthetic process"/>
    <property type="evidence" value="ECO:0007669"/>
    <property type="project" value="UniProtKB-UniRule"/>
</dbReference>
<dbReference type="HAMAP" id="MF_00662">
    <property type="entry name" value="PS_decarb_PSD_B_type1"/>
    <property type="match status" value="1"/>
</dbReference>
<dbReference type="InterPro" id="IPR003817">
    <property type="entry name" value="PS_Dcarbxylase"/>
</dbReference>
<dbReference type="InterPro" id="IPR033177">
    <property type="entry name" value="PSD-B"/>
</dbReference>
<dbReference type="InterPro" id="IPR033178">
    <property type="entry name" value="PSD_type1_pro"/>
</dbReference>
<dbReference type="NCBIfam" id="TIGR00163">
    <property type="entry name" value="PS_decarb"/>
    <property type="match status" value="1"/>
</dbReference>
<dbReference type="PANTHER" id="PTHR10067">
    <property type="entry name" value="PHOSPHATIDYLSERINE DECARBOXYLASE"/>
    <property type="match status" value="1"/>
</dbReference>
<dbReference type="PANTHER" id="PTHR10067:SF6">
    <property type="entry name" value="PHOSPHATIDYLSERINE DECARBOXYLASE PROENZYME, MITOCHONDRIAL"/>
    <property type="match status" value="1"/>
</dbReference>
<dbReference type="Pfam" id="PF02666">
    <property type="entry name" value="PS_Dcarbxylase"/>
    <property type="match status" value="1"/>
</dbReference>
<protein>
    <recommendedName>
        <fullName evidence="1">Phosphatidylserine decarboxylase proenzyme</fullName>
        <ecNumber evidence="1">4.1.1.65</ecNumber>
    </recommendedName>
    <component>
        <recommendedName>
            <fullName evidence="1">Phosphatidylserine decarboxylase alpha chain</fullName>
        </recommendedName>
    </component>
    <component>
        <recommendedName>
            <fullName evidence="1">Phosphatidylserine decarboxylase beta chain</fullName>
        </recommendedName>
    </component>
</protein>
<reference key="1">
    <citation type="journal article" date="2011" name="J. Bacteriol.">
        <title>Comparative genomics of 28 Salmonella enterica isolates: evidence for CRISPR-mediated adaptive sublineage evolution.</title>
        <authorList>
            <person name="Fricke W.F."/>
            <person name="Mammel M.K."/>
            <person name="McDermott P.F."/>
            <person name="Tartera C."/>
            <person name="White D.G."/>
            <person name="Leclerc J.E."/>
            <person name="Ravel J."/>
            <person name="Cebula T.A."/>
        </authorList>
    </citation>
    <scope>NUCLEOTIDE SEQUENCE [LARGE SCALE GENOMIC DNA]</scope>
    <source>
        <strain>CVM19633</strain>
    </source>
</reference>
<organism>
    <name type="scientific">Salmonella schwarzengrund (strain CVM19633)</name>
    <dbReference type="NCBI Taxonomy" id="439843"/>
    <lineage>
        <taxon>Bacteria</taxon>
        <taxon>Pseudomonadati</taxon>
        <taxon>Pseudomonadota</taxon>
        <taxon>Gammaproteobacteria</taxon>
        <taxon>Enterobacterales</taxon>
        <taxon>Enterobacteriaceae</taxon>
        <taxon>Salmonella</taxon>
    </lineage>
</organism>
<keyword id="KW-1003">Cell membrane</keyword>
<keyword id="KW-0210">Decarboxylase</keyword>
<keyword id="KW-0444">Lipid biosynthesis</keyword>
<keyword id="KW-0443">Lipid metabolism</keyword>
<keyword id="KW-0456">Lyase</keyword>
<keyword id="KW-0472">Membrane</keyword>
<keyword id="KW-0594">Phospholipid biosynthesis</keyword>
<keyword id="KW-1208">Phospholipid metabolism</keyword>
<keyword id="KW-0670">Pyruvate</keyword>
<keyword id="KW-0865">Zymogen</keyword>
<accession>B4TSE2</accession>
<comment type="function">
    <text evidence="1">Catalyzes the formation of phosphatidylethanolamine (PtdEtn) from phosphatidylserine (PtdSer).</text>
</comment>
<comment type="catalytic activity">
    <reaction evidence="1">
        <text>a 1,2-diacyl-sn-glycero-3-phospho-L-serine + H(+) = a 1,2-diacyl-sn-glycero-3-phosphoethanolamine + CO2</text>
        <dbReference type="Rhea" id="RHEA:20828"/>
        <dbReference type="ChEBI" id="CHEBI:15378"/>
        <dbReference type="ChEBI" id="CHEBI:16526"/>
        <dbReference type="ChEBI" id="CHEBI:57262"/>
        <dbReference type="ChEBI" id="CHEBI:64612"/>
        <dbReference type="EC" id="4.1.1.65"/>
    </reaction>
</comment>
<comment type="cofactor">
    <cofactor evidence="1">
        <name>pyruvate</name>
        <dbReference type="ChEBI" id="CHEBI:15361"/>
    </cofactor>
    <text evidence="1">Binds 1 pyruvoyl group covalently per subunit.</text>
</comment>
<comment type="pathway">
    <text evidence="1">Phospholipid metabolism; phosphatidylethanolamine biosynthesis; phosphatidylethanolamine from CDP-diacylglycerol: step 2/2.</text>
</comment>
<comment type="subunit">
    <text evidence="1">Heterodimer of a large membrane-associated beta subunit and a small pyruvoyl-containing alpha subunit.</text>
</comment>
<comment type="subcellular location">
    <subcellularLocation>
        <location evidence="1">Cell membrane</location>
        <topology evidence="1">Peripheral membrane protein</topology>
    </subcellularLocation>
</comment>
<comment type="PTM">
    <text evidence="1">Is synthesized initially as an inactive proenzyme. Formation of the active enzyme involves a self-maturation process in which the active site pyruvoyl group is generated from an internal serine residue via an autocatalytic post-translational modification. Two non-identical subunits are generated from the proenzyme in this reaction, and the pyruvate is formed at the N-terminus of the alpha chain, which is derived from the carboxyl end of the proenzyme. The autoendoproteolytic cleavage occurs by a canonical serine protease mechanism, in which the side chain hydroxyl group of the serine supplies its oxygen atom to form the C-terminus of the beta chain, while the remainder of the serine residue undergoes an oxidative deamination to produce ammonia and the pyruvoyl prosthetic group on the alpha chain. During this reaction, the Ser that is part of the protease active site of the proenzyme becomes the pyruvoyl prosthetic group, which constitutes an essential element of the active site of the mature decarboxylase.</text>
</comment>
<comment type="similarity">
    <text evidence="1">Belongs to the phosphatidylserine decarboxylase family. PSD-B subfamily. Prokaryotic type I sub-subfamily.</text>
</comment>
<proteinExistence type="inferred from homology"/>
<evidence type="ECO:0000255" key="1">
    <source>
        <dbReference type="HAMAP-Rule" id="MF_00662"/>
    </source>
</evidence>
<evidence type="ECO:0000256" key="2">
    <source>
        <dbReference type="SAM" id="MobiDB-lite"/>
    </source>
</evidence>
<name>PSD_SALSV</name>
<feature type="chain" id="PRO_1000131404" description="Phosphatidylserine decarboxylase beta chain" evidence="1">
    <location>
        <begin position="1"/>
        <end position="253"/>
    </location>
</feature>
<feature type="chain" id="PRO_1000131405" description="Phosphatidylserine decarboxylase alpha chain" evidence="1">
    <location>
        <begin position="254"/>
        <end position="322"/>
    </location>
</feature>
<feature type="region of interest" description="Disordered" evidence="2">
    <location>
        <begin position="296"/>
        <end position="322"/>
    </location>
</feature>
<feature type="compositionally biased region" description="Basic and acidic residues" evidence="2">
    <location>
        <begin position="303"/>
        <end position="322"/>
    </location>
</feature>
<feature type="active site" description="Charge relay system; for autoendoproteolytic cleavage activity" evidence="1">
    <location>
        <position position="90"/>
    </location>
</feature>
<feature type="active site" description="Charge relay system; for autoendoproteolytic cleavage activity" evidence="1">
    <location>
        <position position="147"/>
    </location>
</feature>
<feature type="active site" description="Charge relay system; for autoendoproteolytic cleavage activity" evidence="1">
    <location>
        <position position="254"/>
    </location>
</feature>
<feature type="active site" description="Schiff-base intermediate with substrate; via pyruvic acid; for decarboxylase activity" evidence="1">
    <location>
        <position position="254"/>
    </location>
</feature>
<feature type="site" description="Cleavage (non-hydrolytic); by autocatalysis" evidence="1">
    <location>
        <begin position="253"/>
        <end position="254"/>
    </location>
</feature>
<feature type="modified residue" description="Pyruvic acid (Ser); by autocatalysis" evidence="1">
    <location>
        <position position="254"/>
    </location>
</feature>
<gene>
    <name evidence="1" type="primary">psd</name>
    <name type="ordered locus">SeSA_A4617</name>
</gene>
<sequence>MLNSFKLSLQYILPKLWLTRLAGWGASKRAGWLTKLVIDLFVKYYKVDMTEAQKPDTASYRTFNDFFVRPLRDDVRPLNTDPNILVMPADGVISQLGRIEEDKILQAKGHNYSLEALLAGNYLMADKFRNGTFVTTYLSPRDYHRVHMPCNGILREMIYVPGDLFSVNHLTAQNVPNLFARNERVICLFDTEFGPMAQILVGATIVGSIETVWAGTITPPREGIIKRWTWPEGEHEGSVALLKGQEMGRFKLGSTVINLFAPGKVNLIASLASLSVTKIGQPLATSTETFVAPEVEPAPLPAEEIKAEHDASPLVDNKKDDT</sequence>